<organism>
    <name type="scientific">Erythrobacter litoralis (strain HTCC2594)</name>
    <dbReference type="NCBI Taxonomy" id="314225"/>
    <lineage>
        <taxon>Bacteria</taxon>
        <taxon>Pseudomonadati</taxon>
        <taxon>Pseudomonadota</taxon>
        <taxon>Alphaproteobacteria</taxon>
        <taxon>Sphingomonadales</taxon>
        <taxon>Erythrobacteraceae</taxon>
        <taxon>Erythrobacter/Porphyrobacter group</taxon>
        <taxon>Erythrobacter</taxon>
    </lineage>
</organism>
<evidence type="ECO:0000255" key="1">
    <source>
        <dbReference type="HAMAP-Rule" id="MF_01014"/>
    </source>
</evidence>
<name>HIS4_ERYLH</name>
<proteinExistence type="inferred from homology"/>
<gene>
    <name evidence="1" type="primary">hisA</name>
    <name type="ordered locus">ELI_09560</name>
</gene>
<keyword id="KW-0028">Amino-acid biosynthesis</keyword>
<keyword id="KW-0963">Cytoplasm</keyword>
<keyword id="KW-0368">Histidine biosynthesis</keyword>
<keyword id="KW-0413">Isomerase</keyword>
<keyword id="KW-1185">Reference proteome</keyword>
<sequence length="242" mass="25472">MIVFPAIDLKGGEVVRLAEGDMDRATVYGDNPAAQAMLFAEAGAEHLHVVDLDGAFAGESRNREAVEAIVAEFPGYVQLGGGIRDATAVEGWFNLGVARIVIGSAALKDPDFVKEMAREWENGIVVAVDARDGMIATEGWAEVSDVPVADMARRFEDAGVASLLFTDIGRDGLLKGCNIDATVELARQTDMPVIASGGVKGLDDIHVLSLHAHEGIEGVITGRALYEGRLDLAAAIAMGARS</sequence>
<dbReference type="EC" id="5.3.1.16" evidence="1"/>
<dbReference type="EMBL" id="CP000157">
    <property type="protein sequence ID" value="ABC64004.1"/>
    <property type="molecule type" value="Genomic_DNA"/>
</dbReference>
<dbReference type="RefSeq" id="WP_011414832.1">
    <property type="nucleotide sequence ID" value="NC_007722.1"/>
</dbReference>
<dbReference type="SMR" id="Q2N8I7"/>
<dbReference type="STRING" id="314225.ELI_09560"/>
<dbReference type="KEGG" id="eli:ELI_09560"/>
<dbReference type="eggNOG" id="COG0106">
    <property type="taxonomic scope" value="Bacteria"/>
</dbReference>
<dbReference type="HOGENOM" id="CLU_048577_1_1_5"/>
<dbReference type="OrthoDB" id="9807749at2"/>
<dbReference type="UniPathway" id="UPA00031">
    <property type="reaction ID" value="UER00009"/>
</dbReference>
<dbReference type="Proteomes" id="UP000008808">
    <property type="component" value="Chromosome"/>
</dbReference>
<dbReference type="GO" id="GO:0005737">
    <property type="term" value="C:cytoplasm"/>
    <property type="evidence" value="ECO:0007669"/>
    <property type="project" value="UniProtKB-SubCell"/>
</dbReference>
<dbReference type="GO" id="GO:0003949">
    <property type="term" value="F:1-(5-phosphoribosyl)-5-[(5-phosphoribosylamino)methylideneamino]imidazole-4-carboxamide isomerase activity"/>
    <property type="evidence" value="ECO:0007669"/>
    <property type="project" value="UniProtKB-UniRule"/>
</dbReference>
<dbReference type="GO" id="GO:0000105">
    <property type="term" value="P:L-histidine biosynthetic process"/>
    <property type="evidence" value="ECO:0007669"/>
    <property type="project" value="UniProtKB-UniRule"/>
</dbReference>
<dbReference type="GO" id="GO:0000162">
    <property type="term" value="P:L-tryptophan biosynthetic process"/>
    <property type="evidence" value="ECO:0007669"/>
    <property type="project" value="TreeGrafter"/>
</dbReference>
<dbReference type="CDD" id="cd04732">
    <property type="entry name" value="HisA"/>
    <property type="match status" value="1"/>
</dbReference>
<dbReference type="FunFam" id="3.20.20.70:FF:000009">
    <property type="entry name" value="1-(5-phosphoribosyl)-5-[(5-phosphoribosylamino)methylideneamino] imidazole-4-carboxamide isomerase"/>
    <property type="match status" value="1"/>
</dbReference>
<dbReference type="Gene3D" id="3.20.20.70">
    <property type="entry name" value="Aldolase class I"/>
    <property type="match status" value="1"/>
</dbReference>
<dbReference type="HAMAP" id="MF_01014">
    <property type="entry name" value="HisA"/>
    <property type="match status" value="1"/>
</dbReference>
<dbReference type="InterPro" id="IPR013785">
    <property type="entry name" value="Aldolase_TIM"/>
</dbReference>
<dbReference type="InterPro" id="IPR006062">
    <property type="entry name" value="His_biosynth"/>
</dbReference>
<dbReference type="InterPro" id="IPR006063">
    <property type="entry name" value="HisA_bact_arch"/>
</dbReference>
<dbReference type="InterPro" id="IPR044524">
    <property type="entry name" value="Isoase_HisA-like"/>
</dbReference>
<dbReference type="InterPro" id="IPR023016">
    <property type="entry name" value="Isoase_HisA-like_bact"/>
</dbReference>
<dbReference type="InterPro" id="IPR011060">
    <property type="entry name" value="RibuloseP-bd_barrel"/>
</dbReference>
<dbReference type="NCBIfam" id="TIGR00007">
    <property type="entry name" value="1-(5-phosphoribosyl)-5-[(5-phosphoribosylamino)methylideneamino]imidazole-4-carboxamide isomerase"/>
    <property type="match status" value="1"/>
</dbReference>
<dbReference type="PANTHER" id="PTHR43090">
    <property type="entry name" value="1-(5-PHOSPHORIBOSYL)-5-[(5-PHOSPHORIBOSYLAMINO)METHYLIDENEAMINO] IMIDAZOLE-4-CARBOXAMIDE ISOMERASE"/>
    <property type="match status" value="1"/>
</dbReference>
<dbReference type="PANTHER" id="PTHR43090:SF2">
    <property type="entry name" value="1-(5-PHOSPHORIBOSYL)-5-[(5-PHOSPHORIBOSYLAMINO)METHYLIDENEAMINO] IMIDAZOLE-4-CARBOXAMIDE ISOMERASE"/>
    <property type="match status" value="1"/>
</dbReference>
<dbReference type="Pfam" id="PF00977">
    <property type="entry name" value="His_biosynth"/>
    <property type="match status" value="1"/>
</dbReference>
<dbReference type="SUPFAM" id="SSF51366">
    <property type="entry name" value="Ribulose-phoshate binding barrel"/>
    <property type="match status" value="1"/>
</dbReference>
<feature type="chain" id="PRO_0000290471" description="1-(5-phosphoribosyl)-5-[(5-phosphoribosylamino)methylideneamino] imidazole-4-carboxamide isomerase">
    <location>
        <begin position="1"/>
        <end position="242"/>
    </location>
</feature>
<feature type="active site" description="Proton acceptor" evidence="1">
    <location>
        <position position="8"/>
    </location>
</feature>
<feature type="active site" description="Proton donor" evidence="1">
    <location>
        <position position="129"/>
    </location>
</feature>
<accession>Q2N8I7</accession>
<comment type="catalytic activity">
    <reaction evidence="1">
        <text>1-(5-phospho-beta-D-ribosyl)-5-[(5-phospho-beta-D-ribosylamino)methylideneamino]imidazole-4-carboxamide = 5-[(5-phospho-1-deoxy-D-ribulos-1-ylimino)methylamino]-1-(5-phospho-beta-D-ribosyl)imidazole-4-carboxamide</text>
        <dbReference type="Rhea" id="RHEA:15469"/>
        <dbReference type="ChEBI" id="CHEBI:58435"/>
        <dbReference type="ChEBI" id="CHEBI:58525"/>
        <dbReference type="EC" id="5.3.1.16"/>
    </reaction>
</comment>
<comment type="pathway">
    <text evidence="1">Amino-acid biosynthesis; L-histidine biosynthesis; L-histidine from 5-phospho-alpha-D-ribose 1-diphosphate: step 4/9.</text>
</comment>
<comment type="subcellular location">
    <subcellularLocation>
        <location evidence="1">Cytoplasm</location>
    </subcellularLocation>
</comment>
<comment type="similarity">
    <text evidence="1">Belongs to the HisA/HisF family.</text>
</comment>
<reference key="1">
    <citation type="journal article" date="2009" name="J. Bacteriol.">
        <title>Complete genome sequence of Erythrobacter litoralis HTCC2594.</title>
        <authorList>
            <person name="Oh H.M."/>
            <person name="Giovannoni S.J."/>
            <person name="Ferriera S."/>
            <person name="Johnson J."/>
            <person name="Cho J.C."/>
        </authorList>
    </citation>
    <scope>NUCLEOTIDE SEQUENCE [LARGE SCALE GENOMIC DNA]</scope>
    <source>
        <strain>HTCC2594</strain>
    </source>
</reference>
<protein>
    <recommendedName>
        <fullName evidence="1">1-(5-phosphoribosyl)-5-[(5-phosphoribosylamino)methylideneamino] imidazole-4-carboxamide isomerase</fullName>
        <ecNumber evidence="1">5.3.1.16</ecNumber>
    </recommendedName>
    <alternativeName>
        <fullName evidence="1">Phosphoribosylformimino-5-aminoimidazole carboxamide ribotide isomerase</fullName>
    </alternativeName>
</protein>